<evidence type="ECO:0000250" key="1"/>
<evidence type="ECO:0000250" key="2">
    <source>
        <dbReference type="UniProtKB" id="P35580"/>
    </source>
</evidence>
<evidence type="ECO:0000250" key="3">
    <source>
        <dbReference type="UniProtKB" id="Q61879"/>
    </source>
</evidence>
<evidence type="ECO:0000250" key="4">
    <source>
        <dbReference type="UniProtKB" id="Q9JLT0"/>
    </source>
</evidence>
<evidence type="ECO:0000255" key="5"/>
<evidence type="ECO:0000255" key="6">
    <source>
        <dbReference type="PROSITE-ProRule" id="PRU00116"/>
    </source>
</evidence>
<evidence type="ECO:0000255" key="7">
    <source>
        <dbReference type="PROSITE-ProRule" id="PRU00782"/>
    </source>
</evidence>
<evidence type="ECO:0000255" key="8">
    <source>
        <dbReference type="PROSITE-ProRule" id="PRU01190"/>
    </source>
</evidence>
<evidence type="ECO:0000256" key="9">
    <source>
        <dbReference type="SAM" id="MobiDB-lite"/>
    </source>
</evidence>
<evidence type="ECO:0000305" key="10"/>
<dbReference type="EMBL" id="AB022023">
    <property type="protein sequence ID" value="BAA36494.1"/>
    <property type="molecule type" value="mRNA"/>
</dbReference>
<dbReference type="EMBL" id="U15716">
    <property type="protein sequence ID" value="AAA87715.1"/>
    <property type="molecule type" value="mRNA"/>
</dbReference>
<dbReference type="RefSeq" id="NP_777259.1">
    <property type="nucleotide sequence ID" value="NM_174834.1"/>
</dbReference>
<dbReference type="SMR" id="Q27991"/>
<dbReference type="FunCoup" id="Q27991">
    <property type="interactions" value="1393"/>
</dbReference>
<dbReference type="STRING" id="9913.ENSBTAP00000065840"/>
<dbReference type="PaxDb" id="9913-ENSBTAP00000028188"/>
<dbReference type="PeptideAtlas" id="Q27991"/>
<dbReference type="GeneID" id="317655"/>
<dbReference type="KEGG" id="bta:317655"/>
<dbReference type="CTD" id="4628"/>
<dbReference type="VEuPathDB" id="HostDB:ENSBTAG00000021151"/>
<dbReference type="eggNOG" id="KOG0160">
    <property type="taxonomic scope" value="Eukaryota"/>
</dbReference>
<dbReference type="eggNOG" id="KOG0161">
    <property type="taxonomic scope" value="Eukaryota"/>
</dbReference>
<dbReference type="HOGENOM" id="CLU_000192_4_4_1"/>
<dbReference type="InParanoid" id="Q27991"/>
<dbReference type="OMA" id="NXVRELE"/>
<dbReference type="OrthoDB" id="10254995at2759"/>
<dbReference type="TreeFam" id="TF333601"/>
<dbReference type="Reactome" id="R-BTA-5627123">
    <property type="pathway name" value="RHO GTPases activate PAKs"/>
</dbReference>
<dbReference type="Proteomes" id="UP000009136">
    <property type="component" value="Chromosome 19"/>
</dbReference>
<dbReference type="Bgee" id="ENSBTAG00000021151">
    <property type="expression patterns" value="Expressed in trachea and 108 other cell types or tissues"/>
</dbReference>
<dbReference type="GO" id="GO:0005737">
    <property type="term" value="C:cytoplasm"/>
    <property type="evidence" value="ECO:0000318"/>
    <property type="project" value="GO_Central"/>
</dbReference>
<dbReference type="GO" id="GO:0030027">
    <property type="term" value="C:lamellipodium"/>
    <property type="evidence" value="ECO:0007669"/>
    <property type="project" value="UniProtKB-SubCell"/>
</dbReference>
<dbReference type="GO" id="GO:0032982">
    <property type="term" value="C:myosin filament"/>
    <property type="evidence" value="ECO:0000318"/>
    <property type="project" value="GO_Central"/>
</dbReference>
<dbReference type="GO" id="GO:0016460">
    <property type="term" value="C:myosin II complex"/>
    <property type="evidence" value="ECO:0000318"/>
    <property type="project" value="GO_Central"/>
</dbReference>
<dbReference type="GO" id="GO:0051015">
    <property type="term" value="F:actin filament binding"/>
    <property type="evidence" value="ECO:0000318"/>
    <property type="project" value="GO_Central"/>
</dbReference>
<dbReference type="GO" id="GO:0005524">
    <property type="term" value="F:ATP binding"/>
    <property type="evidence" value="ECO:0007669"/>
    <property type="project" value="UniProtKB-KW"/>
</dbReference>
<dbReference type="GO" id="GO:0005516">
    <property type="term" value="F:calmodulin binding"/>
    <property type="evidence" value="ECO:0007669"/>
    <property type="project" value="UniProtKB-KW"/>
</dbReference>
<dbReference type="GO" id="GO:0000146">
    <property type="term" value="F:microfilament motor activity"/>
    <property type="evidence" value="ECO:0000318"/>
    <property type="project" value="GO_Central"/>
</dbReference>
<dbReference type="GO" id="GO:0031032">
    <property type="term" value="P:actomyosin structure organization"/>
    <property type="evidence" value="ECO:0000318"/>
    <property type="project" value="GO_Central"/>
</dbReference>
<dbReference type="GO" id="GO:0007155">
    <property type="term" value="P:cell adhesion"/>
    <property type="evidence" value="ECO:0007669"/>
    <property type="project" value="UniProtKB-KW"/>
</dbReference>
<dbReference type="GO" id="GO:0000281">
    <property type="term" value="P:mitotic cytokinesis"/>
    <property type="evidence" value="ECO:0000318"/>
    <property type="project" value="GO_Central"/>
</dbReference>
<dbReference type="GO" id="GO:0008360">
    <property type="term" value="P:regulation of cell shape"/>
    <property type="evidence" value="ECO:0000318"/>
    <property type="project" value="GO_Central"/>
</dbReference>
<dbReference type="CDD" id="cd14920">
    <property type="entry name" value="MYSc_Myh10"/>
    <property type="match status" value="1"/>
</dbReference>
<dbReference type="FunFam" id="2.30.30.360:FF:000001">
    <property type="entry name" value="Myosin heavy chain"/>
    <property type="match status" value="1"/>
</dbReference>
<dbReference type="FunFam" id="1.10.10.820:FF:000002">
    <property type="entry name" value="Myosin heavy chain 10"/>
    <property type="match status" value="1"/>
</dbReference>
<dbReference type="FunFam" id="1.20.120.720:FF:000002">
    <property type="entry name" value="Myosin heavy chain 10"/>
    <property type="match status" value="1"/>
</dbReference>
<dbReference type="FunFam" id="1.20.5.4820:FF:000002">
    <property type="entry name" value="Myosin heavy chain 10"/>
    <property type="match status" value="1"/>
</dbReference>
<dbReference type="FunFam" id="1.20.58.530:FF:000003">
    <property type="entry name" value="Myosin heavy chain 10"/>
    <property type="match status" value="1"/>
</dbReference>
<dbReference type="FunFam" id="1.20.5.340:FF:000008">
    <property type="entry name" value="Myosin heavy chain 11"/>
    <property type="match status" value="1"/>
</dbReference>
<dbReference type="FunFam" id="1.20.5.340:FF:000007">
    <property type="entry name" value="Myosin heavy chain, non-muscle"/>
    <property type="match status" value="1"/>
</dbReference>
<dbReference type="FunFam" id="4.10.270.10:FF:000001">
    <property type="entry name" value="Myosin heavy chain, non-muscle"/>
    <property type="match status" value="1"/>
</dbReference>
<dbReference type="FunFam" id="1.20.5.340:FF:000017">
    <property type="entry name" value="myosin-10 isoform X2"/>
    <property type="match status" value="1"/>
</dbReference>
<dbReference type="FunFam" id="1.20.5.340:FF:000009">
    <property type="entry name" value="myosin-11 isoform X2"/>
    <property type="match status" value="1"/>
</dbReference>
<dbReference type="FunFam" id="3.40.850.10:FF:000101">
    <property type="entry name" value="Slow myosin heavy chain 2"/>
    <property type="match status" value="1"/>
</dbReference>
<dbReference type="Gene3D" id="1.10.10.820">
    <property type="match status" value="1"/>
</dbReference>
<dbReference type="Gene3D" id="1.10.287.1490">
    <property type="match status" value="1"/>
</dbReference>
<dbReference type="Gene3D" id="1.20.5.340">
    <property type="match status" value="4"/>
</dbReference>
<dbReference type="Gene3D" id="1.20.5.4820">
    <property type="match status" value="1"/>
</dbReference>
<dbReference type="Gene3D" id="1.20.58.530">
    <property type="match status" value="1"/>
</dbReference>
<dbReference type="Gene3D" id="6.10.250.2420">
    <property type="match status" value="1"/>
</dbReference>
<dbReference type="Gene3D" id="3.40.850.10">
    <property type="entry name" value="Kinesin motor domain"/>
    <property type="match status" value="1"/>
</dbReference>
<dbReference type="Gene3D" id="2.30.30.360">
    <property type="entry name" value="Myosin S1 fragment, N-terminal"/>
    <property type="match status" value="1"/>
</dbReference>
<dbReference type="Gene3D" id="1.20.120.720">
    <property type="entry name" value="Myosin VI head, motor domain, U50 subdomain"/>
    <property type="match status" value="1"/>
</dbReference>
<dbReference type="InterPro" id="IPR000048">
    <property type="entry name" value="IQ_motif_EF-hand-BS"/>
</dbReference>
<dbReference type="InterPro" id="IPR036961">
    <property type="entry name" value="Kinesin_motor_dom_sf"/>
</dbReference>
<dbReference type="InterPro" id="IPR001609">
    <property type="entry name" value="Myosin_head_motor_dom-like"/>
</dbReference>
<dbReference type="InterPro" id="IPR004009">
    <property type="entry name" value="Myosin_N"/>
</dbReference>
<dbReference type="InterPro" id="IPR008989">
    <property type="entry name" value="Myosin_S1_N"/>
</dbReference>
<dbReference type="InterPro" id="IPR002928">
    <property type="entry name" value="Myosin_tail"/>
</dbReference>
<dbReference type="InterPro" id="IPR027417">
    <property type="entry name" value="P-loop_NTPase"/>
</dbReference>
<dbReference type="PANTHER" id="PTHR45615">
    <property type="entry name" value="MYOSIN HEAVY CHAIN, NON-MUSCLE"/>
    <property type="match status" value="1"/>
</dbReference>
<dbReference type="PANTHER" id="PTHR45615:SF40">
    <property type="entry name" value="MYOSIN HEAVY CHAIN, NON-MUSCLE"/>
    <property type="match status" value="1"/>
</dbReference>
<dbReference type="Pfam" id="PF00612">
    <property type="entry name" value="IQ"/>
    <property type="match status" value="1"/>
</dbReference>
<dbReference type="Pfam" id="PF00063">
    <property type="entry name" value="Myosin_head"/>
    <property type="match status" value="1"/>
</dbReference>
<dbReference type="Pfam" id="PF02736">
    <property type="entry name" value="Myosin_N"/>
    <property type="match status" value="1"/>
</dbReference>
<dbReference type="Pfam" id="PF01576">
    <property type="entry name" value="Myosin_tail_1"/>
    <property type="match status" value="1"/>
</dbReference>
<dbReference type="PRINTS" id="PR00193">
    <property type="entry name" value="MYOSINHEAVY"/>
</dbReference>
<dbReference type="SMART" id="SM00015">
    <property type="entry name" value="IQ"/>
    <property type="match status" value="1"/>
</dbReference>
<dbReference type="SMART" id="SM00242">
    <property type="entry name" value="MYSc"/>
    <property type="match status" value="1"/>
</dbReference>
<dbReference type="SUPFAM" id="SSF90257">
    <property type="entry name" value="Myosin rod fragments"/>
    <property type="match status" value="5"/>
</dbReference>
<dbReference type="SUPFAM" id="SSF50084">
    <property type="entry name" value="Myosin S1 fragment, N-terminal domain"/>
    <property type="match status" value="1"/>
</dbReference>
<dbReference type="SUPFAM" id="SSF52540">
    <property type="entry name" value="P-loop containing nucleoside triphosphate hydrolases"/>
    <property type="match status" value="1"/>
</dbReference>
<dbReference type="PROSITE" id="PS50096">
    <property type="entry name" value="IQ"/>
    <property type="match status" value="1"/>
</dbReference>
<dbReference type="PROSITE" id="PS51456">
    <property type="entry name" value="MYOSIN_MOTOR"/>
    <property type="match status" value="1"/>
</dbReference>
<dbReference type="PROSITE" id="PS51844">
    <property type="entry name" value="SH3_LIKE"/>
    <property type="match status" value="1"/>
</dbReference>
<gene>
    <name type="primary">MYH10</name>
</gene>
<keyword id="KW-0007">Acetylation</keyword>
<keyword id="KW-0009">Actin-binding</keyword>
<keyword id="KW-0067">ATP-binding</keyword>
<keyword id="KW-0112">Calmodulin-binding</keyword>
<keyword id="KW-0130">Cell adhesion</keyword>
<keyword id="KW-0966">Cell projection</keyword>
<keyword id="KW-0133">Cell shape</keyword>
<keyword id="KW-0175">Coiled coil</keyword>
<keyword id="KW-0488">Methylation</keyword>
<keyword id="KW-0505">Motor protein</keyword>
<keyword id="KW-0518">Myosin</keyword>
<keyword id="KW-0547">Nucleotide-binding</keyword>
<keyword id="KW-0597">Phosphoprotein</keyword>
<keyword id="KW-1185">Reference proteome</keyword>
<organism>
    <name type="scientific">Bos taurus</name>
    <name type="common">Bovine</name>
    <dbReference type="NCBI Taxonomy" id="9913"/>
    <lineage>
        <taxon>Eukaryota</taxon>
        <taxon>Metazoa</taxon>
        <taxon>Chordata</taxon>
        <taxon>Craniata</taxon>
        <taxon>Vertebrata</taxon>
        <taxon>Euteleostomi</taxon>
        <taxon>Mammalia</taxon>
        <taxon>Eutheria</taxon>
        <taxon>Laurasiatheria</taxon>
        <taxon>Artiodactyla</taxon>
        <taxon>Ruminantia</taxon>
        <taxon>Pecora</taxon>
        <taxon>Bovidae</taxon>
        <taxon>Bovinae</taxon>
        <taxon>Bos</taxon>
    </lineage>
</organism>
<feature type="chain" id="PRO_0000123420" description="Myosin-10">
    <location>
        <begin position="1"/>
        <end position="1976"/>
    </location>
</feature>
<feature type="domain" description="Myosin N-terminal SH3-like" evidence="8">
    <location>
        <begin position="31"/>
        <end position="81"/>
    </location>
</feature>
<feature type="domain" description="Myosin motor" evidence="7">
    <location>
        <begin position="85"/>
        <end position="783"/>
    </location>
</feature>
<feature type="domain" description="IQ" evidence="6">
    <location>
        <begin position="786"/>
        <end position="815"/>
    </location>
</feature>
<feature type="region of interest" description="Actin-binding" evidence="7">
    <location>
        <begin position="661"/>
        <end position="683"/>
    </location>
</feature>
<feature type="region of interest" description="Disordered" evidence="9">
    <location>
        <begin position="1126"/>
        <end position="1149"/>
    </location>
</feature>
<feature type="region of interest" description="Disordered" evidence="9">
    <location>
        <begin position="1697"/>
        <end position="1718"/>
    </location>
</feature>
<feature type="region of interest" description="Disordered" evidence="9">
    <location>
        <begin position="1874"/>
        <end position="1976"/>
    </location>
</feature>
<feature type="coiled-coil region" evidence="5">
    <location>
        <begin position="845"/>
        <end position="1976"/>
    </location>
</feature>
<feature type="compositionally biased region" description="Basic and acidic residues" evidence="9">
    <location>
        <begin position="1129"/>
        <end position="1149"/>
    </location>
</feature>
<feature type="compositionally biased region" description="Basic and acidic residues" evidence="9">
    <location>
        <begin position="1698"/>
        <end position="1708"/>
    </location>
</feature>
<feature type="compositionally biased region" description="Polar residues" evidence="9">
    <location>
        <begin position="1967"/>
        <end position="1976"/>
    </location>
</feature>
<feature type="binding site" evidence="5">
    <location>
        <begin position="178"/>
        <end position="185"/>
    </location>
    <ligand>
        <name>ATP</name>
        <dbReference type="ChEBI" id="CHEBI:30616"/>
    </ligand>
</feature>
<feature type="modified residue" description="Omega-N-methylarginine" evidence="3">
    <location>
        <position position="18"/>
    </location>
</feature>
<feature type="modified residue" description="N6-acetyllysine" evidence="2">
    <location>
        <position position="442"/>
    </location>
</feature>
<feature type="modified residue" description="Phosphoserine" evidence="2">
    <location>
        <position position="1145"/>
    </location>
</feature>
<feature type="modified residue" description="N6-acetyllysine" evidence="3">
    <location>
        <position position="1241"/>
    </location>
</feature>
<feature type="modified residue" description="N6-acetyllysine" evidence="3">
    <location>
        <position position="1301"/>
    </location>
</feature>
<feature type="modified residue" description="N6-acetyllysine" evidence="2">
    <location>
        <position position="1645"/>
    </location>
</feature>
<feature type="modified residue" description="Omega-N-methylarginine" evidence="3">
    <location>
        <position position="1930"/>
    </location>
</feature>
<feature type="modified residue" description="Phosphoserine" evidence="2">
    <location>
        <position position="1935"/>
    </location>
</feature>
<feature type="modified residue" description="Phosphoserine" evidence="2">
    <location>
        <position position="1937"/>
    </location>
</feature>
<feature type="modified residue" description="Phosphoserine" evidence="2">
    <location>
        <position position="1938"/>
    </location>
</feature>
<feature type="modified residue" description="Phosphoserine" evidence="2">
    <location>
        <position position="1939"/>
    </location>
</feature>
<feature type="modified residue" description="Omega-N-methylarginine" evidence="3">
    <location>
        <position position="1940"/>
    </location>
</feature>
<feature type="modified residue" description="Phosphoserine" evidence="2">
    <location>
        <position position="1952"/>
    </location>
</feature>
<feature type="modified residue" description="Phosphoserine" evidence="2">
    <location>
        <position position="1956"/>
    </location>
</feature>
<feature type="modified residue" description="Phosphothreonine" evidence="2">
    <location>
        <position position="1960"/>
    </location>
</feature>
<feature type="modified residue" description="Phosphoserine" evidence="4">
    <location>
        <position position="1975"/>
    </location>
</feature>
<protein>
    <recommendedName>
        <fullName>Myosin-10</fullName>
    </recommendedName>
    <alternativeName>
        <fullName>Cellular myosin heavy chain, type B</fullName>
    </alternativeName>
    <alternativeName>
        <fullName>Myosin heavy chain 10</fullName>
    </alternativeName>
    <alternativeName>
        <fullName>Myosin heavy chain, non-muscle IIb</fullName>
    </alternativeName>
    <alternativeName>
        <fullName>Non-muscle myosin heavy chain B</fullName>
        <shortName>NMMHC-B</shortName>
    </alternativeName>
    <alternativeName>
        <fullName>Non-muscle myosin heavy chain IIb</fullName>
        <shortName>NMMHC II-b</shortName>
        <shortName>NMMHC-IIB</shortName>
    </alternativeName>
</protein>
<comment type="function">
    <text evidence="1">Cellular myosin that appears to play a role in cytokinesis, cell shape, and specialized functions such as secretion and capping. Involved with LARP6 in the stabilization of type I collagen mRNAs for CO1A1 and CO1A2. During cell spreading, plays an important role in cytoskeleton reorganization, focal contacts formation (in the central part but not the margins of spreading cells), and lamellipodial extension; this function is mechanically antagonized by MYH9 (By similarity).</text>
</comment>
<comment type="subunit">
    <text evidence="2 3">Myosin is a hexameric protein that consists of 2 heavy chain subunits (MHC), 2 alkali light chain subunits (MLC) and 2 regulatory light chain subunits (MLC-2). Interacts with PLEKHG6. Interacts with ECPAS (By similarity). Interacts with KIF26B (By similarity). Interacts with LARP6. Interacts with MCC. Interacts with CFAP95 (By similarity).</text>
</comment>
<comment type="subcellular location">
    <subcellularLocation>
        <location evidence="1">Cell projection</location>
        <location evidence="1">Lamellipodium</location>
    </subcellularLocation>
    <text evidence="1">Colocalizes with MCC at the leading edge of migrating cells.</text>
</comment>
<comment type="domain">
    <text>The rodlike tail sequence is highly repetitive, showing cycles of a 28-residue repeat pattern composed of 4 heptapeptides, characteristic for alpha-helical coiled coils.</text>
</comment>
<comment type="PTM">
    <text evidence="1">Phosphorylated by ABL2.</text>
</comment>
<comment type="similarity">
    <text evidence="10">Belongs to the TRAFAC class myosin-kinesin ATPase superfamily. Myosin family.</text>
</comment>
<comment type="caution">
    <text evidence="10">Represents a conventional non-muscle myosin. This protein should not be confused with the unconventional myosin-10 (MYO10).</text>
</comment>
<accession>Q27991</accession>
<name>MYH10_BOVIN</name>
<reference key="1">
    <citation type="submission" date="1999-01" db="EMBL/GenBank/DDBJ databases">
        <title>Bos taurus nonmuscle myosin heavy chain B mRNA, complete cds.</title>
        <authorList>
            <person name="Ohara M."/>
            <person name="Ishiguro N."/>
            <person name="Shinagawa M."/>
        </authorList>
    </citation>
    <scope>NUCLEOTIDE SEQUENCE [MRNA]</scope>
</reference>
<reference key="2">
    <citation type="journal article" date="1995" name="J. Biol. Chem.">
        <title>Neuronal cell expression of inserted isoforms of vertebrate nonmuscle myosin heavy chain II-B.</title>
        <authorList>
            <person name="Itoh K."/>
            <person name="Adelstein R.S."/>
        </authorList>
    </citation>
    <scope>NUCLEOTIDE SEQUENCE [MRNA] OF 204-302</scope>
    <source>
        <tissue>Brain cortex</tissue>
    </source>
</reference>
<sequence>MAQRTGLEDPERYLFVDRAVIYNPATQADWTAKKLVWIPSERHGFEAASIKEERGDEVLVELAENGKKAMVNKDDIQKMNPPKFSKVEDMAELTCLNEASVLHNLKDRYYSGLIYTYSGLFCVVINPYKNLPIYSENIIEMYRGKKRHEMPPHIYAISESAYRCMLQDREDQSILCTGESGAGKTENTKKVIQYLAHVASSHKGRKDHNIPGELERQLLQANPILESFGNAKTVKNDNSSRFGKFIRINFDVTGYIVGANIETYLLEKSRAVRQAKDERTFHIFYQLLSGAGEHLKSDLLLEGFNNYRFLSNGYIPIPGQQDKDNFQETMEAMHIMGFSHEEILSMLKVVSSVLQFGNISFKKERNTDQASMPENTVAQKLCHLLGMNVMEFTRAILTPRIKVGRDYVQKAQTKEQADFAVEALAKATYERLFRWLVHRINKALDRTKRQGASFIGILDIAGFEIFELNSFEQLCINYTNEKLQQLFNHTMFILEQEEYQREGIEWNFIDFGLDLQPCIDLIERPANPPGVLALLDEECWFPKATDKTFVEKLVQEQGSHSKFQKPRQLKDKADFCIIHYAGKVDYKADEWLMKNMDPLNDNVATLLHQSSDRFVAELWKDVDRIVGLDQVTGMTETAFGSAYKTKKGMFRTVGQLYKESLTKLMATLRNTNPNFVRCIIPNHEKRAGKLDPHLVLDQLRCNGVLEGIRICRQGFPNRIVFQEFRQRYEILTPNAIPKGFMDGKQACERMIRALELDPNLYRIGQSKIFFRAGVLAHLEEERDLKITDIIIFFQAVCRGYLARKAFAKKQQQLSALKVLQRNCAAYLKLRHWQWWRVFTKVKPLLQVTRQEEELQAKDEELLKVKEKQTKVEGELEEMERKHQQLLEEKNILAEQLQAETELFAEAEEMRARLAAKKQELEEILHDLESRVEEEEERNQILQNEKKKMQAHIQDLEEQLDEEEGARQKLQLEKVTAEAKIKKMEEEILLLEDQNSKFIKEKKLMEDRIAECSSQLAEEEEKAKNLAKIRNKQEVMISDLEERLKKEEKTRQELEKAKRKLDGETTDLQDQIAELQAQIDELKIQVAKKEEELQGALARGDDETLHKNNALKVVRELQAQIAELQEDFESEKASRNKAEKQKRDLSEELEALKTELEDTLDTTAAQQELRTKREQEVAELKKALEEETKSHEAQIQDMRQRHATALEELSEQLEQAKRFKANLEKNKQGLETDNKELACEVKVLQQVKAESEHKRKKLDAQVQELHAKVSEGDRLRVELAEKANKLQNELDNVSTLLEEAEKKGIKFAKDAAGLESQLQDTQELLQEETRQKLNLSSRIRQLEEERSSLQEQQEEEEEARRSLEKQLQALQAQLTDTKKKVDDDLGTIENLEEAKKKLLKDVEVLSQRLEEKALAYDKLEKTKTRLQQELDDLLVDLDHQRQIVSNLEKKQKKFDQLLAEEKNISARYAEERDRAEAEAREKETKALSLARALEEALEAREEAERQNKQLRADMEDLMSSKDDVGKNVHELEKSKRALEQQVEEMRTQLEELEDELQATEDAKLRLEVNMQAMKAQFERDLQTRDEQNEEKKRLLIKQVRELEAELEDERKQRALAVASKKKMEIDLKDLEAQIEAANKARDEVIKQLRKLQAQMKDYQRELEEARASRDEIFAQSKESEKKLKSLEAEILQLQEELASSERARRHAEQERDELADEIANSASGKSALLDEKRRLEARIAQLEEELEEEQSNMELLNDRFRKTTLQVDTLNTELAAERSAAQKSDNARQQLERQNKELKAKLQELEGAVKSKFKATISALEAKIGQLEEQLEQEAKERAAANKLVRRTEKKLKEIFMQVEDERRHADQYKEQMEKANARMKQLKRQLEEAEEEATRANASRRKLQRELDDATEANEGLSREVSTLKNRLRRGGPISFSSSRSGRRQLHIEGASLELSDDDTESKTSDINETQPPQSE</sequence>
<proteinExistence type="evidence at transcript level"/>